<reference key="1">
    <citation type="journal article" date="1994" name="J. Eukaryot. Microbiol.">
        <title>Tubulin genes in the algal protist Euglena gracilis.</title>
        <authorList>
            <person name="Levasseur P.J."/>
            <person name="Meng Q."/>
            <person name="Bouck G.B."/>
        </authorList>
    </citation>
    <scope>NUCLEOTIDE SEQUENCE [MRNA]</scope>
    <source>
        <strain>Z / UTEX 753</strain>
    </source>
</reference>
<gene>
    <name type="primary">TUBA</name>
</gene>
<sequence length="451" mass="49892">MREIISIHLGQGGIQIGNACWELYCLEHGIQPDGSMPSDKAIGVEDDAFNTFFSETGAGKHVPRAVFLDLEPSVVDEVRTGTYRQLFHPEQLISGKEDAANNYARGHYTIGKEIVDLCLDRIRKLADNCTGLQGFLAFHAVGGGTGSGLGRLLLERLSVDYGKKSKLGFTIYPSPQISTAVVEPYNSVLSTHSLLEHTDVAVMLDNEAIYDICRRNLDIERPTYTNLNRLIAQVISSLTASLRFDGALNVDITEFQTNLVPYPRIHFVLSSYAPIISAEKAYHEQLSVAEITNAAFEPASMMAKCDPRHGKYMACCLMYRGDVVPKDVNASVATIKTKRTIQFVDWCPTGFKCGINYQPPTVVPGGDLAKVQRAVCMISNSTAIAEVFARIDHKFDLMYSKRAFVHWYVGEGMEEGEFSEAREDLAALEKDYEEVGAESADVEGEEDVEEY</sequence>
<comment type="function">
    <text>Tubulin is the major constituent of microtubules, a cylinder consisting of laterally associated linear protofilaments composed of alpha- and beta-tubulin heterodimers. Microtubules grow by the addition of GTP-tubulin dimers to the microtubule end, where a stabilizing cap forms. Below the cap, tubulin dimers are in GDP-bound state, owing to GTPase activity of alpha-tubulin.</text>
</comment>
<comment type="catalytic activity">
    <reaction evidence="2">
        <text>GTP + H2O = GDP + phosphate + H(+)</text>
        <dbReference type="Rhea" id="RHEA:19669"/>
        <dbReference type="ChEBI" id="CHEBI:15377"/>
        <dbReference type="ChEBI" id="CHEBI:15378"/>
        <dbReference type="ChEBI" id="CHEBI:37565"/>
        <dbReference type="ChEBI" id="CHEBI:43474"/>
        <dbReference type="ChEBI" id="CHEBI:58189"/>
    </reaction>
    <physiologicalReaction direction="left-to-right" evidence="2">
        <dbReference type="Rhea" id="RHEA:19670"/>
    </physiologicalReaction>
</comment>
<comment type="cofactor">
    <cofactor evidence="2">
        <name>Mg(2+)</name>
        <dbReference type="ChEBI" id="CHEBI:18420"/>
    </cofactor>
</comment>
<comment type="subunit">
    <text>Dimer of alpha and beta chains. A typical microtubule is a hollow water-filled tube with an outer diameter of 25 nm and an inner diameter of 15 nM. Alpha-beta heterodimers associate head-to-tail to form protofilaments running lengthwise along the microtubule wall with the beta-tubulin subunit facing the microtubule plus end conferring a structural polarity. Microtubules usually have 13 protofilaments but different protofilament numbers can be found in some organisms and specialized cells.</text>
</comment>
<comment type="subcellular location">
    <subcellularLocation>
        <location>Cytoplasm</location>
        <location>Cytoskeleton</location>
    </subcellularLocation>
</comment>
<comment type="PTM">
    <text evidence="1">Undergoes a tyrosination/detyrosination cycle, the cyclic removal and re-addition of a C-terminal tyrosine residue by the enzymes tubulin tyrosine carboxypeptidase (TTCP) and tubulin tyrosine ligase (TTL), respectively.</text>
</comment>
<comment type="PTM">
    <text evidence="1">Acetylation of alpha chains at Lys-40 stabilizes microtubules and affects affinity and processivity of microtubule motors. This modification has a role in multiple cellular functions, ranging from cell motility, cell cycle progression or cell differentiation to intracellular trafficking and signaling (By similarity).</text>
</comment>
<comment type="similarity">
    <text evidence="3">Belongs to the tubulin family.</text>
</comment>
<organism>
    <name type="scientific">Euglena gracilis</name>
    <dbReference type="NCBI Taxonomy" id="3039"/>
    <lineage>
        <taxon>Eukaryota</taxon>
        <taxon>Discoba</taxon>
        <taxon>Euglenozoa</taxon>
        <taxon>Euglenida</taxon>
        <taxon>Spirocuta</taxon>
        <taxon>Euglenophyceae</taxon>
        <taxon>Euglenales</taxon>
        <taxon>Euglenaceae</taxon>
        <taxon>Euglena</taxon>
    </lineage>
</organism>
<evidence type="ECO:0000250" key="1"/>
<evidence type="ECO:0000250" key="2">
    <source>
        <dbReference type="UniProtKB" id="P68363"/>
    </source>
</evidence>
<evidence type="ECO:0000305" key="3"/>
<keyword id="KW-0007">Acetylation</keyword>
<keyword id="KW-0963">Cytoplasm</keyword>
<keyword id="KW-0206">Cytoskeleton</keyword>
<keyword id="KW-0342">GTP-binding</keyword>
<keyword id="KW-0378">Hydrolase</keyword>
<keyword id="KW-0460">Magnesium</keyword>
<keyword id="KW-0479">Metal-binding</keyword>
<keyword id="KW-0493">Microtubule</keyword>
<keyword id="KW-0547">Nucleotide-binding</keyword>
<name>TBA_EUGGR</name>
<protein>
    <recommendedName>
        <fullName>Tubulin alpha chain</fullName>
        <ecNumber evidence="2">3.6.5.-</ecNumber>
    </recommendedName>
</protein>
<proteinExistence type="evidence at transcript level"/>
<feature type="chain" id="PRO_0000048170" description="Tubulin alpha chain">
    <location>
        <begin position="1"/>
        <end position="451"/>
    </location>
</feature>
<feature type="active site" evidence="2">
    <location>
        <position position="254"/>
    </location>
</feature>
<feature type="binding site" evidence="2">
    <location>
        <position position="11"/>
    </location>
    <ligand>
        <name>GTP</name>
        <dbReference type="ChEBI" id="CHEBI:37565"/>
    </ligand>
</feature>
<feature type="binding site" evidence="2">
    <location>
        <position position="71"/>
    </location>
    <ligand>
        <name>GTP</name>
        <dbReference type="ChEBI" id="CHEBI:37565"/>
    </ligand>
</feature>
<feature type="binding site" evidence="2">
    <location>
        <position position="71"/>
    </location>
    <ligand>
        <name>Mg(2+)</name>
        <dbReference type="ChEBI" id="CHEBI:18420"/>
    </ligand>
</feature>
<feature type="binding site" evidence="2">
    <location>
        <position position="144"/>
    </location>
    <ligand>
        <name>GTP</name>
        <dbReference type="ChEBI" id="CHEBI:37565"/>
    </ligand>
</feature>
<feature type="binding site" evidence="2">
    <location>
        <position position="145"/>
    </location>
    <ligand>
        <name>GTP</name>
        <dbReference type="ChEBI" id="CHEBI:37565"/>
    </ligand>
</feature>
<feature type="binding site" evidence="2">
    <location>
        <position position="179"/>
    </location>
    <ligand>
        <name>GTP</name>
        <dbReference type="ChEBI" id="CHEBI:37565"/>
    </ligand>
</feature>
<feature type="binding site" evidence="2">
    <location>
        <position position="206"/>
    </location>
    <ligand>
        <name>GTP</name>
        <dbReference type="ChEBI" id="CHEBI:37565"/>
    </ligand>
</feature>
<feature type="binding site" evidence="2">
    <location>
        <position position="228"/>
    </location>
    <ligand>
        <name>GTP</name>
        <dbReference type="ChEBI" id="CHEBI:37565"/>
    </ligand>
</feature>
<feature type="site" description="Involved in polymerization">
    <location>
        <position position="451"/>
    </location>
</feature>
<feature type="modified residue" description="N6-acetyllysine" evidence="1">
    <location>
        <position position="40"/>
    </location>
</feature>
<dbReference type="EC" id="3.6.5.-" evidence="2"/>
<dbReference type="EMBL" id="Z22877">
    <property type="protein sequence ID" value="CAA80497.1"/>
    <property type="molecule type" value="mRNA"/>
</dbReference>
<dbReference type="PIR" id="S33512">
    <property type="entry name" value="S33512"/>
</dbReference>
<dbReference type="SMR" id="P33625"/>
<dbReference type="GO" id="GO:0005737">
    <property type="term" value="C:cytoplasm"/>
    <property type="evidence" value="ECO:0007669"/>
    <property type="project" value="UniProtKB-KW"/>
</dbReference>
<dbReference type="GO" id="GO:0005874">
    <property type="term" value="C:microtubule"/>
    <property type="evidence" value="ECO:0007669"/>
    <property type="project" value="UniProtKB-KW"/>
</dbReference>
<dbReference type="GO" id="GO:0005525">
    <property type="term" value="F:GTP binding"/>
    <property type="evidence" value="ECO:0007669"/>
    <property type="project" value="UniProtKB-KW"/>
</dbReference>
<dbReference type="GO" id="GO:0016787">
    <property type="term" value="F:hydrolase activity"/>
    <property type="evidence" value="ECO:0007669"/>
    <property type="project" value="UniProtKB-KW"/>
</dbReference>
<dbReference type="GO" id="GO:0046872">
    <property type="term" value="F:metal ion binding"/>
    <property type="evidence" value="ECO:0007669"/>
    <property type="project" value="UniProtKB-KW"/>
</dbReference>
<dbReference type="GO" id="GO:0005200">
    <property type="term" value="F:structural constituent of cytoskeleton"/>
    <property type="evidence" value="ECO:0007669"/>
    <property type="project" value="InterPro"/>
</dbReference>
<dbReference type="GO" id="GO:0007017">
    <property type="term" value="P:microtubule-based process"/>
    <property type="evidence" value="ECO:0007669"/>
    <property type="project" value="InterPro"/>
</dbReference>
<dbReference type="CDD" id="cd02186">
    <property type="entry name" value="alpha_tubulin"/>
    <property type="match status" value="1"/>
</dbReference>
<dbReference type="FunFam" id="1.10.287.600:FF:000005">
    <property type="entry name" value="Tubulin alpha chain"/>
    <property type="match status" value="1"/>
</dbReference>
<dbReference type="FunFam" id="3.30.1330.20:FF:000001">
    <property type="entry name" value="Tubulin alpha chain"/>
    <property type="match status" value="1"/>
</dbReference>
<dbReference type="FunFam" id="3.40.50.1440:FF:000004">
    <property type="entry name" value="Tubulin alpha chain"/>
    <property type="match status" value="1"/>
</dbReference>
<dbReference type="Gene3D" id="1.10.287.600">
    <property type="entry name" value="Helix hairpin bin"/>
    <property type="match status" value="1"/>
</dbReference>
<dbReference type="Gene3D" id="3.30.1330.20">
    <property type="entry name" value="Tubulin/FtsZ, C-terminal domain"/>
    <property type="match status" value="1"/>
</dbReference>
<dbReference type="Gene3D" id="3.40.50.1440">
    <property type="entry name" value="Tubulin/FtsZ, GTPase domain"/>
    <property type="match status" value="1"/>
</dbReference>
<dbReference type="InterPro" id="IPR002452">
    <property type="entry name" value="Alpha_tubulin"/>
</dbReference>
<dbReference type="InterPro" id="IPR013838">
    <property type="entry name" value="Beta-tubulin_BS"/>
</dbReference>
<dbReference type="InterPro" id="IPR008280">
    <property type="entry name" value="Tub_FtsZ_C"/>
</dbReference>
<dbReference type="InterPro" id="IPR000217">
    <property type="entry name" value="Tubulin"/>
</dbReference>
<dbReference type="InterPro" id="IPR037103">
    <property type="entry name" value="Tubulin/FtsZ-like_C"/>
</dbReference>
<dbReference type="InterPro" id="IPR018316">
    <property type="entry name" value="Tubulin/FtsZ_2-layer-sand-dom"/>
</dbReference>
<dbReference type="InterPro" id="IPR036525">
    <property type="entry name" value="Tubulin/FtsZ_GTPase_sf"/>
</dbReference>
<dbReference type="InterPro" id="IPR023123">
    <property type="entry name" value="Tubulin_C"/>
</dbReference>
<dbReference type="InterPro" id="IPR017975">
    <property type="entry name" value="Tubulin_CS"/>
</dbReference>
<dbReference type="InterPro" id="IPR003008">
    <property type="entry name" value="Tubulin_FtsZ_GTPase"/>
</dbReference>
<dbReference type="PANTHER" id="PTHR11588">
    <property type="entry name" value="TUBULIN"/>
    <property type="match status" value="1"/>
</dbReference>
<dbReference type="Pfam" id="PF00091">
    <property type="entry name" value="Tubulin"/>
    <property type="match status" value="1"/>
</dbReference>
<dbReference type="Pfam" id="PF03953">
    <property type="entry name" value="Tubulin_C"/>
    <property type="match status" value="1"/>
</dbReference>
<dbReference type="PRINTS" id="PR01162">
    <property type="entry name" value="ALPHATUBULIN"/>
</dbReference>
<dbReference type="PRINTS" id="PR01161">
    <property type="entry name" value="TUBULIN"/>
</dbReference>
<dbReference type="SMART" id="SM00864">
    <property type="entry name" value="Tubulin"/>
    <property type="match status" value="1"/>
</dbReference>
<dbReference type="SMART" id="SM00865">
    <property type="entry name" value="Tubulin_C"/>
    <property type="match status" value="1"/>
</dbReference>
<dbReference type="SUPFAM" id="SSF55307">
    <property type="entry name" value="Tubulin C-terminal domain-like"/>
    <property type="match status" value="1"/>
</dbReference>
<dbReference type="SUPFAM" id="SSF52490">
    <property type="entry name" value="Tubulin nucleotide-binding domain-like"/>
    <property type="match status" value="1"/>
</dbReference>
<dbReference type="PROSITE" id="PS00227">
    <property type="entry name" value="TUBULIN"/>
    <property type="match status" value="1"/>
</dbReference>
<accession>P33625</accession>